<reference key="1">
    <citation type="journal article" date="1998" name="J. Biol. Chem.">
        <title>Structure and expression of the mRNA encoding a novel fibroblast growth factor, FGF-18.</title>
        <authorList>
            <person name="Ohbayashi N."/>
            <person name="Hoshikawa M."/>
            <person name="Kimura S."/>
            <person name="Yamasaki M."/>
            <person name="Fukui S."/>
            <person name="Ito N."/>
        </authorList>
    </citation>
    <scope>NUCLEOTIDE SEQUENCE [MRNA]</scope>
    <source>
        <strain>Wistar</strain>
        <tissue>Embryo</tissue>
    </source>
</reference>
<proteinExistence type="evidence at transcript level"/>
<protein>
    <recommendedName>
        <fullName>Fibroblast growth factor 18</fullName>
        <shortName>FGF-18</shortName>
    </recommendedName>
</protein>
<organism>
    <name type="scientific">Rattus norvegicus</name>
    <name type="common">Rat</name>
    <dbReference type="NCBI Taxonomy" id="10116"/>
    <lineage>
        <taxon>Eukaryota</taxon>
        <taxon>Metazoa</taxon>
        <taxon>Chordata</taxon>
        <taxon>Craniata</taxon>
        <taxon>Vertebrata</taxon>
        <taxon>Euteleostomi</taxon>
        <taxon>Mammalia</taxon>
        <taxon>Eutheria</taxon>
        <taxon>Euarchontoglires</taxon>
        <taxon>Glires</taxon>
        <taxon>Rodentia</taxon>
        <taxon>Myomorpha</taxon>
        <taxon>Muroidea</taxon>
        <taxon>Muridae</taxon>
        <taxon>Murinae</taxon>
        <taxon>Rattus</taxon>
    </lineage>
</organism>
<comment type="function">
    <text evidence="1">Plays an important role in the regulation of cell proliferation, cell differentiation and cell migration. Required for normal ossification and bone development. Stimulates hepatic and intestinal proliferation (By similarity).</text>
</comment>
<comment type="subunit">
    <text evidence="1">Interacts with FGFR3 and FGFR4.</text>
</comment>
<comment type="subcellular location">
    <subcellularLocation>
        <location>Secreted</location>
    </subcellularLocation>
</comment>
<comment type="tissue specificity">
    <text>Mainly expressed in the lung. Not detected in brain, heart, liver, kidney and small intestine.</text>
</comment>
<comment type="developmental stage">
    <text>Expressed in several discrete regions at 14.5 dpc and 19.5 dpc but not 10.5 dpc. At 14.5 dpc, expressed in isthmus, pituitary, spinal cord, tongue, intervertebral disk, dorsal root ganglion and pelvis. At 19.5 dpc, expressed in lung and anterior pituitary.</text>
</comment>
<comment type="similarity">
    <text evidence="4">Belongs to the heparin-binding growth factors family.</text>
</comment>
<feature type="signal peptide" evidence="2">
    <location>
        <begin position="1"/>
        <end position="27"/>
    </location>
</feature>
<feature type="chain" id="PRO_0000008992" description="Fibroblast growth factor 18">
    <location>
        <begin position="28"/>
        <end position="207"/>
    </location>
</feature>
<feature type="region of interest" description="Disordered" evidence="3">
    <location>
        <begin position="157"/>
        <end position="183"/>
    </location>
</feature>
<feature type="compositionally biased region" description="Basic and acidic residues" evidence="3">
    <location>
        <begin position="164"/>
        <end position="174"/>
    </location>
</feature>
<feature type="glycosylation site" description="N-linked (GlcNAc...) asparagine" evidence="2">
    <location>
        <position position="39"/>
    </location>
</feature>
<feature type="glycosylation site" description="N-linked (GlcNAc...) asparagine" evidence="2">
    <location>
        <position position="137"/>
    </location>
</feature>
<feature type="disulfide bond" evidence="1">
    <location>
        <begin position="109"/>
        <end position="127"/>
    </location>
</feature>
<accession>O88182</accession>
<keyword id="KW-1015">Disulfide bond</keyword>
<keyword id="KW-0325">Glycoprotein</keyword>
<keyword id="KW-0339">Growth factor</keyword>
<keyword id="KW-1185">Reference proteome</keyword>
<keyword id="KW-0964">Secreted</keyword>
<keyword id="KW-0732">Signal</keyword>
<gene>
    <name type="primary">Fgf18</name>
</gene>
<evidence type="ECO:0000250" key="1"/>
<evidence type="ECO:0000255" key="2"/>
<evidence type="ECO:0000256" key="3">
    <source>
        <dbReference type="SAM" id="MobiDB-lite"/>
    </source>
</evidence>
<evidence type="ECO:0000305" key="4"/>
<name>FGF18_RAT</name>
<dbReference type="EMBL" id="AB004638">
    <property type="protein sequence ID" value="BAA31979.1"/>
    <property type="molecule type" value="mRNA"/>
</dbReference>
<dbReference type="RefSeq" id="NP_062072.1">
    <property type="nucleotide sequence ID" value="NM_019199.2"/>
</dbReference>
<dbReference type="SMR" id="O88182"/>
<dbReference type="FunCoup" id="O88182">
    <property type="interactions" value="538"/>
</dbReference>
<dbReference type="STRING" id="10116.ENSRNOP00000064983"/>
<dbReference type="GlyCosmos" id="O88182">
    <property type="glycosylation" value="2 sites, No reported glycans"/>
</dbReference>
<dbReference type="GlyGen" id="O88182">
    <property type="glycosylation" value="2 sites"/>
</dbReference>
<dbReference type="PhosphoSitePlus" id="O88182"/>
<dbReference type="PaxDb" id="10116-ENSRNOP00000064983"/>
<dbReference type="Ensembl" id="ENSRNOT00000103123.1">
    <property type="protein sequence ID" value="ENSRNOP00000084264.1"/>
    <property type="gene ID" value="ENSRNOG00000048389.3"/>
</dbReference>
<dbReference type="GeneID" id="29369"/>
<dbReference type="KEGG" id="rno:29369"/>
<dbReference type="AGR" id="RGD:2608"/>
<dbReference type="CTD" id="8817"/>
<dbReference type="RGD" id="2608">
    <property type="gene designation" value="Fgf18"/>
</dbReference>
<dbReference type="eggNOG" id="KOG3885">
    <property type="taxonomic scope" value="Eukaryota"/>
</dbReference>
<dbReference type="GeneTree" id="ENSGT00940000159553"/>
<dbReference type="InParanoid" id="O88182"/>
<dbReference type="OMA" id="XPHSAMS"/>
<dbReference type="OrthoDB" id="57946at9989"/>
<dbReference type="PhylomeDB" id="O88182"/>
<dbReference type="Reactome" id="R-RNO-109704">
    <property type="pathway name" value="PI3K Cascade"/>
</dbReference>
<dbReference type="Reactome" id="R-RNO-1257604">
    <property type="pathway name" value="PIP3 activates AKT signaling"/>
</dbReference>
<dbReference type="Reactome" id="R-RNO-190322">
    <property type="pathway name" value="FGFR4 ligand binding and activation"/>
</dbReference>
<dbReference type="Reactome" id="R-RNO-190371">
    <property type="pathway name" value="FGFR3b ligand binding and activation"/>
</dbReference>
<dbReference type="Reactome" id="R-RNO-190372">
    <property type="pathway name" value="FGFR3c ligand binding and activation"/>
</dbReference>
<dbReference type="Reactome" id="R-RNO-190375">
    <property type="pathway name" value="FGFR2c ligand binding and activation"/>
</dbReference>
<dbReference type="Reactome" id="R-RNO-5654221">
    <property type="pathway name" value="Phospholipase C-mediated cascade, FGFR2"/>
</dbReference>
<dbReference type="Reactome" id="R-RNO-5654227">
    <property type="pathway name" value="Phospholipase C-mediated cascade, FGFR3"/>
</dbReference>
<dbReference type="Reactome" id="R-RNO-5654228">
    <property type="pathway name" value="Phospholipase C-mediated cascade, FGFR4"/>
</dbReference>
<dbReference type="Reactome" id="R-RNO-5654695">
    <property type="pathway name" value="PI-3K cascade:FGFR2"/>
</dbReference>
<dbReference type="Reactome" id="R-RNO-5654699">
    <property type="pathway name" value="SHC-mediated cascade:FGFR2"/>
</dbReference>
<dbReference type="Reactome" id="R-RNO-5654700">
    <property type="pathway name" value="FRS-mediated FGFR2 signaling"/>
</dbReference>
<dbReference type="Reactome" id="R-RNO-5654704">
    <property type="pathway name" value="SHC-mediated cascade:FGFR3"/>
</dbReference>
<dbReference type="Reactome" id="R-RNO-5654706">
    <property type="pathway name" value="FRS-mediated FGFR3 signaling"/>
</dbReference>
<dbReference type="Reactome" id="R-RNO-5654710">
    <property type="pathway name" value="PI-3K cascade:FGFR3"/>
</dbReference>
<dbReference type="Reactome" id="R-RNO-5654712">
    <property type="pathway name" value="FRS-mediated FGFR4 signaling"/>
</dbReference>
<dbReference type="Reactome" id="R-RNO-5654719">
    <property type="pathway name" value="SHC-mediated cascade:FGFR4"/>
</dbReference>
<dbReference type="Reactome" id="R-RNO-5654720">
    <property type="pathway name" value="PI-3K cascade:FGFR4"/>
</dbReference>
<dbReference type="Reactome" id="R-RNO-5654727">
    <property type="pathway name" value="Negative regulation of FGFR2 signaling"/>
</dbReference>
<dbReference type="Reactome" id="R-RNO-5654732">
    <property type="pathway name" value="Negative regulation of FGFR3 signaling"/>
</dbReference>
<dbReference type="Reactome" id="R-RNO-5654733">
    <property type="pathway name" value="Negative regulation of FGFR4 signaling"/>
</dbReference>
<dbReference type="Reactome" id="R-RNO-5658623">
    <property type="pathway name" value="FGFRL1 modulation of FGFR1 signaling"/>
</dbReference>
<dbReference type="Reactome" id="R-RNO-5673001">
    <property type="pathway name" value="RAF/MAP kinase cascade"/>
</dbReference>
<dbReference type="Reactome" id="R-RNO-6811558">
    <property type="pathway name" value="PI5P, PP2A and IER3 Regulate PI3K/AKT Signaling"/>
</dbReference>
<dbReference type="PRO" id="PR:O88182"/>
<dbReference type="Proteomes" id="UP000002494">
    <property type="component" value="Chromosome 10"/>
</dbReference>
<dbReference type="GO" id="GO:0005737">
    <property type="term" value="C:cytoplasm"/>
    <property type="evidence" value="ECO:0000314"/>
    <property type="project" value="UniProtKB"/>
</dbReference>
<dbReference type="GO" id="GO:0005615">
    <property type="term" value="C:extracellular space"/>
    <property type="evidence" value="ECO:0000318"/>
    <property type="project" value="GO_Central"/>
</dbReference>
<dbReference type="GO" id="GO:0005634">
    <property type="term" value="C:nucleus"/>
    <property type="evidence" value="ECO:0000314"/>
    <property type="project" value="UniProtKB"/>
</dbReference>
<dbReference type="GO" id="GO:0005104">
    <property type="term" value="F:fibroblast growth factor receptor binding"/>
    <property type="evidence" value="ECO:0000303"/>
    <property type="project" value="RGD"/>
</dbReference>
<dbReference type="GO" id="GO:0008083">
    <property type="term" value="F:growth factor activity"/>
    <property type="evidence" value="ECO:0000318"/>
    <property type="project" value="GO_Central"/>
</dbReference>
<dbReference type="GO" id="GO:0005105">
    <property type="term" value="F:type 1 fibroblast growth factor receptor binding"/>
    <property type="evidence" value="ECO:0000266"/>
    <property type="project" value="RGD"/>
</dbReference>
<dbReference type="GO" id="GO:0005111">
    <property type="term" value="F:type 2 fibroblast growth factor receptor binding"/>
    <property type="evidence" value="ECO:0000266"/>
    <property type="project" value="RGD"/>
</dbReference>
<dbReference type="GO" id="GO:0001525">
    <property type="term" value="P:angiogenesis"/>
    <property type="evidence" value="ECO:0000266"/>
    <property type="project" value="RGD"/>
</dbReference>
<dbReference type="GO" id="GO:0008283">
    <property type="term" value="P:cell population proliferation"/>
    <property type="evidence" value="ECO:0000266"/>
    <property type="project" value="RGD"/>
</dbReference>
<dbReference type="GO" id="GO:0002063">
    <property type="term" value="P:chondrocyte development"/>
    <property type="evidence" value="ECO:0000266"/>
    <property type="project" value="RGD"/>
</dbReference>
<dbReference type="GO" id="GO:0002062">
    <property type="term" value="P:chondrocyte differentiation"/>
    <property type="evidence" value="ECO:0000266"/>
    <property type="project" value="RGD"/>
</dbReference>
<dbReference type="GO" id="GO:0001958">
    <property type="term" value="P:endochondral ossification"/>
    <property type="evidence" value="ECO:0000266"/>
    <property type="project" value="RGD"/>
</dbReference>
<dbReference type="GO" id="GO:0070371">
    <property type="term" value="P:ERK1 and ERK2 cascade"/>
    <property type="evidence" value="ECO:0000266"/>
    <property type="project" value="RGD"/>
</dbReference>
<dbReference type="GO" id="GO:0008543">
    <property type="term" value="P:fibroblast growth factor receptor signaling pathway"/>
    <property type="evidence" value="ECO:0000266"/>
    <property type="project" value="RGD"/>
</dbReference>
<dbReference type="GO" id="GO:0001957">
    <property type="term" value="P:intramembranous ossification"/>
    <property type="evidence" value="ECO:0000266"/>
    <property type="project" value="RGD"/>
</dbReference>
<dbReference type="GO" id="GO:0030324">
    <property type="term" value="P:lung development"/>
    <property type="evidence" value="ECO:0000266"/>
    <property type="project" value="RGD"/>
</dbReference>
<dbReference type="GO" id="GO:0007399">
    <property type="term" value="P:nervous system development"/>
    <property type="evidence" value="ECO:0000315"/>
    <property type="project" value="RGD"/>
</dbReference>
<dbReference type="GO" id="GO:0022008">
    <property type="term" value="P:neurogenesis"/>
    <property type="evidence" value="ECO:0000318"/>
    <property type="project" value="GO_Central"/>
</dbReference>
<dbReference type="GO" id="GO:0001503">
    <property type="term" value="P:ossification"/>
    <property type="evidence" value="ECO:0000266"/>
    <property type="project" value="RGD"/>
</dbReference>
<dbReference type="GO" id="GO:0045766">
    <property type="term" value="P:positive regulation of angiogenesis"/>
    <property type="evidence" value="ECO:0000266"/>
    <property type="project" value="RGD"/>
</dbReference>
<dbReference type="GO" id="GO:0043536">
    <property type="term" value="P:positive regulation of blood vessel endothelial cell migration"/>
    <property type="evidence" value="ECO:0000266"/>
    <property type="project" value="RGD"/>
</dbReference>
<dbReference type="GO" id="GO:0008284">
    <property type="term" value="P:positive regulation of cell population proliferation"/>
    <property type="evidence" value="ECO:0000266"/>
    <property type="project" value="RGD"/>
</dbReference>
<dbReference type="GO" id="GO:0032332">
    <property type="term" value="P:positive regulation of chondrocyte differentiation"/>
    <property type="evidence" value="ECO:0000266"/>
    <property type="project" value="RGD"/>
</dbReference>
<dbReference type="GO" id="GO:2000546">
    <property type="term" value="P:positive regulation of endothelial cell chemotaxis to fibroblast growth factor"/>
    <property type="evidence" value="ECO:0000266"/>
    <property type="project" value="RGD"/>
</dbReference>
<dbReference type="GO" id="GO:0070374">
    <property type="term" value="P:positive regulation of ERK1 and ERK2 cascade"/>
    <property type="evidence" value="ECO:0000266"/>
    <property type="project" value="RGD"/>
</dbReference>
<dbReference type="GO" id="GO:2000347">
    <property type="term" value="P:positive regulation of hepatocyte proliferation"/>
    <property type="evidence" value="ECO:0000314"/>
    <property type="project" value="UniProtKB"/>
</dbReference>
<dbReference type="GO" id="GO:0043410">
    <property type="term" value="P:positive regulation of MAPK cascade"/>
    <property type="evidence" value="ECO:0000318"/>
    <property type="project" value="GO_Central"/>
</dbReference>
<dbReference type="GO" id="GO:0030949">
    <property type="term" value="P:positive regulation of vascular endothelial growth factor receptor signaling pathway"/>
    <property type="evidence" value="ECO:0000266"/>
    <property type="project" value="RGD"/>
</dbReference>
<dbReference type="GO" id="GO:0030334">
    <property type="term" value="P:regulation of cell migration"/>
    <property type="evidence" value="ECO:0000318"/>
    <property type="project" value="GO_Central"/>
</dbReference>
<dbReference type="GO" id="GO:0048010">
    <property type="term" value="P:vascular endothelial growth factor receptor signaling pathway"/>
    <property type="evidence" value="ECO:0000266"/>
    <property type="project" value="RGD"/>
</dbReference>
<dbReference type="CDD" id="cd23324">
    <property type="entry name" value="beta-trefoil_FGF18"/>
    <property type="match status" value="1"/>
</dbReference>
<dbReference type="FunFam" id="2.80.10.50:FF:000007">
    <property type="entry name" value="Fibroblast growth factor"/>
    <property type="match status" value="1"/>
</dbReference>
<dbReference type="Gene3D" id="2.80.10.50">
    <property type="match status" value="1"/>
</dbReference>
<dbReference type="InterPro" id="IPR002209">
    <property type="entry name" value="Fibroblast_GF_fam"/>
</dbReference>
<dbReference type="InterPro" id="IPR008996">
    <property type="entry name" value="IL1/FGF"/>
</dbReference>
<dbReference type="PANTHER" id="PTHR11486">
    <property type="entry name" value="FIBROBLAST GROWTH FACTOR"/>
    <property type="match status" value="1"/>
</dbReference>
<dbReference type="Pfam" id="PF00167">
    <property type="entry name" value="FGF"/>
    <property type="match status" value="1"/>
</dbReference>
<dbReference type="PRINTS" id="PR00262">
    <property type="entry name" value="IL1HBGF"/>
</dbReference>
<dbReference type="SMART" id="SM00442">
    <property type="entry name" value="FGF"/>
    <property type="match status" value="1"/>
</dbReference>
<dbReference type="SUPFAM" id="SSF50353">
    <property type="entry name" value="Cytokine"/>
    <property type="match status" value="1"/>
</dbReference>
<dbReference type="PROSITE" id="PS00247">
    <property type="entry name" value="HBGF_FGF"/>
    <property type="match status" value="1"/>
</dbReference>
<sequence length="207" mass="23951">MYSAPSACTCLCLHFLLLCFQVQVLAAEENVDFRIHVENQTRARDDVSRKQLRLYQLYSRTSGKHIQVLGRRISARGEDGDKYAQLLVETDTFGSQVRIKGKETEFYLCMNRKGKLVGKPDGTSKECVFIEKVLENNYTALMSAKYSGWYVGFTKKGRPRKGPKTRENQQDVHFMKRYPKGQTELQKPFKYTTVTKRSRRIRPTHPG</sequence>